<gene>
    <name evidence="1" type="primary">leuD</name>
    <name type="ordered locus">RBAM_025310</name>
</gene>
<reference key="1">
    <citation type="journal article" date="2007" name="Nat. Biotechnol.">
        <title>Comparative analysis of the complete genome sequence of the plant growth-promoting bacterium Bacillus amyloliquefaciens FZB42.</title>
        <authorList>
            <person name="Chen X.H."/>
            <person name="Koumoutsi A."/>
            <person name="Scholz R."/>
            <person name="Eisenreich A."/>
            <person name="Schneider K."/>
            <person name="Heinemeyer I."/>
            <person name="Morgenstern B."/>
            <person name="Voss B."/>
            <person name="Hess W.R."/>
            <person name="Reva O."/>
            <person name="Junge H."/>
            <person name="Voigt B."/>
            <person name="Jungblut P.R."/>
            <person name="Vater J."/>
            <person name="Suessmuth R."/>
            <person name="Liesegang H."/>
            <person name="Strittmatter A."/>
            <person name="Gottschalk G."/>
            <person name="Borriss R."/>
        </authorList>
    </citation>
    <scope>NUCLEOTIDE SEQUENCE [LARGE SCALE GENOMIC DNA]</scope>
    <source>
        <strain>DSM 23117 / BGSC 10A6 / LMG 26770 / FZB42</strain>
    </source>
</reference>
<proteinExistence type="inferred from homology"/>
<sequence>MEPLKTHTGKAAVLNRINVDTDQIIPKQFLKRIERTGYGRFAFFDWRYLENGEPDPEFELNRKVYEGASILIAGENFGCGSSREHAPWALDDYGFKIIIAPSFADIFHQNCFKNGMLPIRMPYDQWKKLAGQYENQSLNMTVDLENQLIHDSEGKEISFEVDPHWKEMLINGYDEISLTLLLEDDIQQFESKRSSWLQA</sequence>
<organism>
    <name type="scientific">Bacillus velezensis (strain DSM 23117 / BGSC 10A6 / LMG 26770 / FZB42)</name>
    <name type="common">Bacillus amyloliquefaciens subsp. plantarum</name>
    <dbReference type="NCBI Taxonomy" id="326423"/>
    <lineage>
        <taxon>Bacteria</taxon>
        <taxon>Bacillati</taxon>
        <taxon>Bacillota</taxon>
        <taxon>Bacilli</taxon>
        <taxon>Bacillales</taxon>
        <taxon>Bacillaceae</taxon>
        <taxon>Bacillus</taxon>
        <taxon>Bacillus amyloliquefaciens group</taxon>
    </lineage>
</organism>
<comment type="function">
    <text evidence="1">Catalyzes the isomerization between 2-isopropylmalate and 3-isopropylmalate, via the formation of 2-isopropylmaleate.</text>
</comment>
<comment type="catalytic activity">
    <reaction evidence="1">
        <text>(2R,3S)-3-isopropylmalate = (2S)-2-isopropylmalate</text>
        <dbReference type="Rhea" id="RHEA:32287"/>
        <dbReference type="ChEBI" id="CHEBI:1178"/>
        <dbReference type="ChEBI" id="CHEBI:35121"/>
        <dbReference type="EC" id="4.2.1.33"/>
    </reaction>
</comment>
<comment type="pathway">
    <text evidence="1">Amino-acid biosynthesis; L-leucine biosynthesis; L-leucine from 3-methyl-2-oxobutanoate: step 2/4.</text>
</comment>
<comment type="subunit">
    <text evidence="1">Heterodimer of LeuC and LeuD.</text>
</comment>
<comment type="similarity">
    <text evidence="1">Belongs to the LeuD family. LeuD type 1 subfamily.</text>
</comment>
<evidence type="ECO:0000255" key="1">
    <source>
        <dbReference type="HAMAP-Rule" id="MF_01031"/>
    </source>
</evidence>
<protein>
    <recommendedName>
        <fullName evidence="1">3-isopropylmalate dehydratase small subunit</fullName>
        <ecNumber evidence="1">4.2.1.33</ecNumber>
    </recommendedName>
    <alternativeName>
        <fullName evidence="1">Alpha-IPM isomerase</fullName>
        <shortName evidence="1">IPMI</shortName>
    </alternativeName>
    <alternativeName>
        <fullName evidence="1">Isopropylmalate isomerase</fullName>
    </alternativeName>
</protein>
<feature type="chain" id="PRO_1000063733" description="3-isopropylmalate dehydratase small subunit">
    <location>
        <begin position="1"/>
        <end position="199"/>
    </location>
</feature>
<keyword id="KW-0028">Amino-acid biosynthesis</keyword>
<keyword id="KW-0100">Branched-chain amino acid biosynthesis</keyword>
<keyword id="KW-0432">Leucine biosynthesis</keyword>
<keyword id="KW-0456">Lyase</keyword>
<name>LEUD_BACVZ</name>
<dbReference type="EC" id="4.2.1.33" evidence="1"/>
<dbReference type="EMBL" id="CP000560">
    <property type="protein sequence ID" value="ABS74891.1"/>
    <property type="molecule type" value="Genomic_DNA"/>
</dbReference>
<dbReference type="RefSeq" id="WP_007408146.1">
    <property type="nucleotide sequence ID" value="NC_009725.2"/>
</dbReference>
<dbReference type="SMR" id="A7Z7B5"/>
<dbReference type="GeneID" id="93081673"/>
<dbReference type="KEGG" id="bay:RBAM_025310"/>
<dbReference type="HOGENOM" id="CLU_081378_0_3_9"/>
<dbReference type="UniPathway" id="UPA00048">
    <property type="reaction ID" value="UER00071"/>
</dbReference>
<dbReference type="Proteomes" id="UP000001120">
    <property type="component" value="Chromosome"/>
</dbReference>
<dbReference type="GO" id="GO:0009316">
    <property type="term" value="C:3-isopropylmalate dehydratase complex"/>
    <property type="evidence" value="ECO:0007669"/>
    <property type="project" value="InterPro"/>
</dbReference>
<dbReference type="GO" id="GO:0003861">
    <property type="term" value="F:3-isopropylmalate dehydratase activity"/>
    <property type="evidence" value="ECO:0007669"/>
    <property type="project" value="UniProtKB-UniRule"/>
</dbReference>
<dbReference type="GO" id="GO:0009098">
    <property type="term" value="P:L-leucine biosynthetic process"/>
    <property type="evidence" value="ECO:0007669"/>
    <property type="project" value="UniProtKB-UniRule"/>
</dbReference>
<dbReference type="CDD" id="cd01577">
    <property type="entry name" value="IPMI_Swivel"/>
    <property type="match status" value="1"/>
</dbReference>
<dbReference type="FunFam" id="3.20.19.10:FF:000003">
    <property type="entry name" value="3-isopropylmalate dehydratase small subunit"/>
    <property type="match status" value="1"/>
</dbReference>
<dbReference type="Gene3D" id="3.20.19.10">
    <property type="entry name" value="Aconitase, domain 4"/>
    <property type="match status" value="1"/>
</dbReference>
<dbReference type="HAMAP" id="MF_01031">
    <property type="entry name" value="LeuD_type1"/>
    <property type="match status" value="1"/>
</dbReference>
<dbReference type="InterPro" id="IPR004431">
    <property type="entry name" value="3-IsopropMal_deHydase_ssu"/>
</dbReference>
<dbReference type="InterPro" id="IPR015928">
    <property type="entry name" value="Aconitase/3IPM_dehydase_swvl"/>
</dbReference>
<dbReference type="InterPro" id="IPR000573">
    <property type="entry name" value="AconitaseA/IPMdHydase_ssu_swvl"/>
</dbReference>
<dbReference type="InterPro" id="IPR033940">
    <property type="entry name" value="IPMI_Swivel"/>
</dbReference>
<dbReference type="InterPro" id="IPR050075">
    <property type="entry name" value="LeuD"/>
</dbReference>
<dbReference type="NCBIfam" id="TIGR00171">
    <property type="entry name" value="leuD"/>
    <property type="match status" value="1"/>
</dbReference>
<dbReference type="NCBIfam" id="NF002458">
    <property type="entry name" value="PRK01641.1"/>
    <property type="match status" value="1"/>
</dbReference>
<dbReference type="PANTHER" id="PTHR43345:SF5">
    <property type="entry name" value="3-ISOPROPYLMALATE DEHYDRATASE SMALL SUBUNIT"/>
    <property type="match status" value="1"/>
</dbReference>
<dbReference type="PANTHER" id="PTHR43345">
    <property type="entry name" value="3-ISOPROPYLMALATE DEHYDRATASE SMALL SUBUNIT 2-RELATED-RELATED"/>
    <property type="match status" value="1"/>
</dbReference>
<dbReference type="Pfam" id="PF00694">
    <property type="entry name" value="Aconitase_C"/>
    <property type="match status" value="1"/>
</dbReference>
<dbReference type="SUPFAM" id="SSF52016">
    <property type="entry name" value="LeuD/IlvD-like"/>
    <property type="match status" value="1"/>
</dbReference>
<accession>A7Z7B5</accession>